<protein>
    <recommendedName>
        <fullName>Cytochrome b</fullName>
    </recommendedName>
    <alternativeName>
        <fullName>Complex III subunit 3</fullName>
    </alternativeName>
    <alternativeName>
        <fullName>Complex III subunit III</fullName>
    </alternativeName>
    <alternativeName>
        <fullName>Cytochrome b-c1 complex subunit 3</fullName>
    </alternativeName>
    <alternativeName>
        <fullName>Ubiquinol-cytochrome-c reductase complex cytochrome b subunit</fullName>
    </alternativeName>
</protein>
<feature type="chain" id="PRO_0000061162" description="Cytochrome b">
    <location>
        <begin position="1"/>
        <end position="379"/>
    </location>
</feature>
<feature type="transmembrane region" description="Helical" evidence="2">
    <location>
        <begin position="33"/>
        <end position="53"/>
    </location>
</feature>
<feature type="transmembrane region" description="Helical" evidence="2">
    <location>
        <begin position="77"/>
        <end position="98"/>
    </location>
</feature>
<feature type="transmembrane region" description="Helical" evidence="2">
    <location>
        <begin position="113"/>
        <end position="133"/>
    </location>
</feature>
<feature type="transmembrane region" description="Helical" evidence="2">
    <location>
        <begin position="178"/>
        <end position="198"/>
    </location>
</feature>
<feature type="transmembrane region" description="Helical" evidence="2">
    <location>
        <begin position="226"/>
        <end position="246"/>
    </location>
</feature>
<feature type="transmembrane region" description="Helical" evidence="2">
    <location>
        <begin position="288"/>
        <end position="308"/>
    </location>
</feature>
<feature type="transmembrane region" description="Helical" evidence="2">
    <location>
        <begin position="320"/>
        <end position="340"/>
    </location>
</feature>
<feature type="transmembrane region" description="Helical" evidence="2">
    <location>
        <begin position="347"/>
        <end position="367"/>
    </location>
</feature>
<feature type="binding site" description="axial binding residue" evidence="2">
    <location>
        <position position="83"/>
    </location>
    <ligand>
        <name>heme b</name>
        <dbReference type="ChEBI" id="CHEBI:60344"/>
        <label>b562</label>
    </ligand>
    <ligandPart>
        <name>Fe</name>
        <dbReference type="ChEBI" id="CHEBI:18248"/>
    </ligandPart>
</feature>
<feature type="binding site" description="axial binding residue" evidence="2">
    <location>
        <position position="97"/>
    </location>
    <ligand>
        <name>heme b</name>
        <dbReference type="ChEBI" id="CHEBI:60344"/>
        <label>b566</label>
    </ligand>
    <ligandPart>
        <name>Fe</name>
        <dbReference type="ChEBI" id="CHEBI:18248"/>
    </ligandPart>
</feature>
<feature type="binding site" description="axial binding residue" evidence="2">
    <location>
        <position position="182"/>
    </location>
    <ligand>
        <name>heme b</name>
        <dbReference type="ChEBI" id="CHEBI:60344"/>
        <label>b562</label>
    </ligand>
    <ligandPart>
        <name>Fe</name>
        <dbReference type="ChEBI" id="CHEBI:18248"/>
    </ligandPart>
</feature>
<feature type="binding site" description="axial binding residue" evidence="2">
    <location>
        <position position="196"/>
    </location>
    <ligand>
        <name>heme b</name>
        <dbReference type="ChEBI" id="CHEBI:60344"/>
        <label>b566</label>
    </ligand>
    <ligandPart>
        <name>Fe</name>
        <dbReference type="ChEBI" id="CHEBI:18248"/>
    </ligandPart>
</feature>
<feature type="binding site" evidence="2">
    <location>
        <position position="201"/>
    </location>
    <ligand>
        <name>a ubiquinone</name>
        <dbReference type="ChEBI" id="CHEBI:16389"/>
    </ligand>
</feature>
<feature type="sequence conflict" description="In Ref. 2; AAD45208." evidence="5" ref="2">
    <original>Y</original>
    <variation>H</variation>
    <location>
        <position position="55"/>
    </location>
</feature>
<feature type="sequence conflict" description="In Ref. 2; AAD45208." evidence="5" ref="2">
    <original>G</original>
    <variation>E</variation>
    <location>
        <position position="340"/>
    </location>
</feature>
<gene>
    <name type="primary">MT-CYB</name>
    <name type="synonym">COB</name>
    <name type="synonym">CYTB</name>
    <name type="synonym">MTCYB</name>
</gene>
<geneLocation type="mitochondrion"/>
<accession>Q9TH56</accession>
<accession>Q9XP29</accession>
<comment type="function">
    <text evidence="2">Component of the ubiquinol-cytochrome c reductase complex (complex III or cytochrome b-c1 complex) that is part of the mitochondrial respiratory chain. The b-c1 complex mediates electron transfer from ubiquinol to cytochrome c. Contributes to the generation of a proton gradient across the mitochondrial membrane that is then used for ATP synthesis.</text>
</comment>
<comment type="cofactor">
    <cofactor evidence="2">
        <name>heme b</name>
        <dbReference type="ChEBI" id="CHEBI:60344"/>
    </cofactor>
    <text evidence="2">Binds 2 heme b groups non-covalently.</text>
</comment>
<comment type="subunit">
    <text evidence="2">The cytochrome bc1 complex contains 11 subunits: 3 respiratory subunits (MT-CYB, CYC1 and UQCRFS1), 2 core proteins (UQCRC1 and UQCRC2) and 6 low-molecular weight proteins (UQCRH/QCR6, UQCRB/QCR7, UQCRQ/QCR8, UQCR10/QCR9, UQCR11/QCR10 and a cleavage product of UQCRFS1). This cytochrome bc1 complex then forms a dimer.</text>
</comment>
<comment type="subcellular location">
    <subcellularLocation>
        <location evidence="2">Mitochondrion inner membrane</location>
        <topology evidence="2">Multi-pass membrane protein</topology>
    </subcellularLocation>
</comment>
<comment type="miscellaneous">
    <text evidence="1">Heme 1 (or BL or b562) is low-potential and absorbs at about 562 nm, and heme 2 (or BH or b566) is high-potential and absorbs at about 566 nm.</text>
</comment>
<comment type="similarity">
    <text evidence="3 4">Belongs to the cytochrome b family.</text>
</comment>
<comment type="caution">
    <text evidence="2">The full-length protein contains only eight transmembrane helices, not nine as predicted by bioinformatics tools.</text>
</comment>
<evidence type="ECO:0000250" key="1"/>
<evidence type="ECO:0000250" key="2">
    <source>
        <dbReference type="UniProtKB" id="P00157"/>
    </source>
</evidence>
<evidence type="ECO:0000255" key="3">
    <source>
        <dbReference type="PROSITE-ProRule" id="PRU00967"/>
    </source>
</evidence>
<evidence type="ECO:0000255" key="4">
    <source>
        <dbReference type="PROSITE-ProRule" id="PRU00968"/>
    </source>
</evidence>
<evidence type="ECO:0000305" key="5"/>
<organism>
    <name type="scientific">Marmota vancouverensis</name>
    <name type="common">Vancouver Island marmot</name>
    <dbReference type="NCBI Taxonomy" id="93167"/>
    <lineage>
        <taxon>Eukaryota</taxon>
        <taxon>Metazoa</taxon>
        <taxon>Chordata</taxon>
        <taxon>Craniata</taxon>
        <taxon>Vertebrata</taxon>
        <taxon>Euteleostomi</taxon>
        <taxon>Mammalia</taxon>
        <taxon>Eutheria</taxon>
        <taxon>Euarchontoglires</taxon>
        <taxon>Glires</taxon>
        <taxon>Rodentia</taxon>
        <taxon>Sciuromorpha</taxon>
        <taxon>Sciuridae</taxon>
        <taxon>Xerinae</taxon>
        <taxon>Marmotini</taxon>
        <taxon>Marmota</taxon>
    </lineage>
</organism>
<sequence length="379" mass="43014">MTNTRKTHPLIKIMNHSFIDLPTPSNISTWWNFGSLLGLCLVIQILTGLFLAMHYTSDTLTAFSSVTHICRDVNYGWLIRYMHANGASVFFICLFLHVGRGMYYGSYTYFETWNIGVILLFAVMATAFMGYVLPWGQMSFWGATVITNLLSAIPYIGTTLVEWIWGGFSVDKATLTRFFAFHFVLPFIIAALVMVHLLFLHETGSNNPSGLISDSDKIPFHPYYTIKDILGVLLLILILMTLILFSPDLLGDPDNYTPANPLSTPPHIKPEWYFLFAYAILRSIPNKLGGVLALVFSILILMLFPLLHLSKQRSMMFRPLSQCMFWILVADLFTLTWIGGQPVEYPYIIIGQLASILYFAIILLILPTISLIENKLLKW</sequence>
<keyword id="KW-0249">Electron transport</keyword>
<keyword id="KW-0349">Heme</keyword>
<keyword id="KW-0408">Iron</keyword>
<keyword id="KW-0472">Membrane</keyword>
<keyword id="KW-0479">Metal-binding</keyword>
<keyword id="KW-0496">Mitochondrion</keyword>
<keyword id="KW-0999">Mitochondrion inner membrane</keyword>
<keyword id="KW-0679">Respiratory chain</keyword>
<keyword id="KW-0812">Transmembrane</keyword>
<keyword id="KW-1133">Transmembrane helix</keyword>
<keyword id="KW-0813">Transport</keyword>
<keyword id="KW-0830">Ubiquinone</keyword>
<reference key="1">
    <citation type="journal article" date="1999" name="Syst. Biol.">
        <title>Molecular phylogeny of the marmots (Rodentia: Sciuridae): tests of evolutionary and biogeographic hypotheses.</title>
        <authorList>
            <person name="Steppan S.J."/>
            <person name="Akhverdyan M.R."/>
            <person name="Lyapunova E.A."/>
            <person name="Fraser D.G."/>
            <person name="Vorontsov N.N."/>
            <person name="Hoffmann R.S."/>
            <person name="Braun M.J."/>
        </authorList>
    </citation>
    <scope>NUCLEOTIDE SEQUENCE [GENOMIC DNA]</scope>
</reference>
<reference key="2">
    <citation type="journal article" date="1999" name="J. Zool. Syst. Evol. Res.">
        <title>Marmot phylogeny revisited: molecular evidence for a diphyletic origin of sociality.</title>
        <authorList>
            <person name="Kruckenhauser L."/>
            <person name="Pinsker W."/>
            <person name="Haring E."/>
            <person name="Arnold W."/>
        </authorList>
    </citation>
    <scope>NUCLEOTIDE SEQUENCE [GENOMIC DNA]</scope>
</reference>
<name>CYB_MARVA</name>
<proteinExistence type="inferred from homology"/>
<dbReference type="EMBL" id="AF143939">
    <property type="protein sequence ID" value="AAD29746.1"/>
    <property type="molecule type" value="Genomic_DNA"/>
</dbReference>
<dbReference type="EMBL" id="AF100717">
    <property type="protein sequence ID" value="AAD45208.1"/>
    <property type="molecule type" value="Genomic_DNA"/>
</dbReference>
<dbReference type="SMR" id="Q9TH56"/>
<dbReference type="GO" id="GO:0005743">
    <property type="term" value="C:mitochondrial inner membrane"/>
    <property type="evidence" value="ECO:0007669"/>
    <property type="project" value="UniProtKB-SubCell"/>
</dbReference>
<dbReference type="GO" id="GO:0045275">
    <property type="term" value="C:respiratory chain complex III"/>
    <property type="evidence" value="ECO:0007669"/>
    <property type="project" value="InterPro"/>
</dbReference>
<dbReference type="GO" id="GO:0046872">
    <property type="term" value="F:metal ion binding"/>
    <property type="evidence" value="ECO:0007669"/>
    <property type="project" value="UniProtKB-KW"/>
</dbReference>
<dbReference type="GO" id="GO:0008121">
    <property type="term" value="F:ubiquinol-cytochrome-c reductase activity"/>
    <property type="evidence" value="ECO:0007669"/>
    <property type="project" value="InterPro"/>
</dbReference>
<dbReference type="GO" id="GO:0006122">
    <property type="term" value="P:mitochondrial electron transport, ubiquinol to cytochrome c"/>
    <property type="evidence" value="ECO:0007669"/>
    <property type="project" value="TreeGrafter"/>
</dbReference>
<dbReference type="CDD" id="cd00290">
    <property type="entry name" value="cytochrome_b_C"/>
    <property type="match status" value="1"/>
</dbReference>
<dbReference type="CDD" id="cd00284">
    <property type="entry name" value="Cytochrome_b_N"/>
    <property type="match status" value="1"/>
</dbReference>
<dbReference type="FunFam" id="1.20.810.10:FF:000002">
    <property type="entry name" value="Cytochrome b"/>
    <property type="match status" value="1"/>
</dbReference>
<dbReference type="Gene3D" id="1.20.810.10">
    <property type="entry name" value="Cytochrome Bc1 Complex, Chain C"/>
    <property type="match status" value="1"/>
</dbReference>
<dbReference type="InterPro" id="IPR005798">
    <property type="entry name" value="Cyt_b/b6_C"/>
</dbReference>
<dbReference type="InterPro" id="IPR036150">
    <property type="entry name" value="Cyt_b/b6_C_sf"/>
</dbReference>
<dbReference type="InterPro" id="IPR005797">
    <property type="entry name" value="Cyt_b/b6_N"/>
</dbReference>
<dbReference type="InterPro" id="IPR027387">
    <property type="entry name" value="Cytb/b6-like_sf"/>
</dbReference>
<dbReference type="InterPro" id="IPR030689">
    <property type="entry name" value="Cytochrome_b"/>
</dbReference>
<dbReference type="InterPro" id="IPR048260">
    <property type="entry name" value="Cytochrome_b_C_euk/bac"/>
</dbReference>
<dbReference type="InterPro" id="IPR048259">
    <property type="entry name" value="Cytochrome_b_N_euk/bac"/>
</dbReference>
<dbReference type="InterPro" id="IPR016174">
    <property type="entry name" value="Di-haem_cyt_TM"/>
</dbReference>
<dbReference type="PANTHER" id="PTHR19271">
    <property type="entry name" value="CYTOCHROME B"/>
    <property type="match status" value="1"/>
</dbReference>
<dbReference type="PANTHER" id="PTHR19271:SF16">
    <property type="entry name" value="CYTOCHROME B"/>
    <property type="match status" value="1"/>
</dbReference>
<dbReference type="Pfam" id="PF00032">
    <property type="entry name" value="Cytochrom_B_C"/>
    <property type="match status" value="1"/>
</dbReference>
<dbReference type="Pfam" id="PF00033">
    <property type="entry name" value="Cytochrome_B"/>
    <property type="match status" value="1"/>
</dbReference>
<dbReference type="PIRSF" id="PIRSF038885">
    <property type="entry name" value="COB"/>
    <property type="match status" value="1"/>
</dbReference>
<dbReference type="SUPFAM" id="SSF81648">
    <property type="entry name" value="a domain/subunit of cytochrome bc1 complex (Ubiquinol-cytochrome c reductase)"/>
    <property type="match status" value="1"/>
</dbReference>
<dbReference type="SUPFAM" id="SSF81342">
    <property type="entry name" value="Transmembrane di-heme cytochromes"/>
    <property type="match status" value="1"/>
</dbReference>
<dbReference type="PROSITE" id="PS51003">
    <property type="entry name" value="CYTB_CTER"/>
    <property type="match status" value="1"/>
</dbReference>
<dbReference type="PROSITE" id="PS51002">
    <property type="entry name" value="CYTB_NTER"/>
    <property type="match status" value="1"/>
</dbReference>